<sequence length="125" mass="13867">MINSPRVCIQVQSVYIEAQSSPDNERYVFAYTVTIRNLGRAPVQLLGRYWLITNGNGRETEVQGEGVVGVQPLIAPGEEYQYTSGAIIETPLGTMQGHYEMIDENGVPFSIDIPVFRLAVPTLIH</sequence>
<gene>
    <name evidence="1" type="primary">apaG</name>
    <name type="ordered locus">UTI89_C0057</name>
</gene>
<evidence type="ECO:0000255" key="1">
    <source>
        <dbReference type="HAMAP-Rule" id="MF_00791"/>
    </source>
</evidence>
<name>APAG_ECOUT</name>
<protein>
    <recommendedName>
        <fullName evidence="1">Protein ApaG</fullName>
    </recommendedName>
</protein>
<proteinExistence type="inferred from homology"/>
<reference key="1">
    <citation type="journal article" date="2006" name="Proc. Natl. Acad. Sci. U.S.A.">
        <title>Identification of genes subject to positive selection in uropathogenic strains of Escherichia coli: a comparative genomics approach.</title>
        <authorList>
            <person name="Chen S.L."/>
            <person name="Hung C.-S."/>
            <person name="Xu J."/>
            <person name="Reigstad C.S."/>
            <person name="Magrini V."/>
            <person name="Sabo A."/>
            <person name="Blasiar D."/>
            <person name="Bieri T."/>
            <person name="Meyer R.R."/>
            <person name="Ozersky P."/>
            <person name="Armstrong J.R."/>
            <person name="Fulton R.S."/>
            <person name="Latreille J.P."/>
            <person name="Spieth J."/>
            <person name="Hooton T.M."/>
            <person name="Mardis E.R."/>
            <person name="Hultgren S.J."/>
            <person name="Gordon J.I."/>
        </authorList>
    </citation>
    <scope>NUCLEOTIDE SEQUENCE [LARGE SCALE GENOMIC DNA]</scope>
    <source>
        <strain>UTI89 / UPEC</strain>
    </source>
</reference>
<feature type="chain" id="PRO_1000083621" description="Protein ApaG">
    <location>
        <begin position="1"/>
        <end position="125"/>
    </location>
</feature>
<feature type="domain" description="ApaG" evidence="1">
    <location>
        <begin position="1"/>
        <end position="125"/>
    </location>
</feature>
<accession>Q1RGE7</accession>
<dbReference type="EMBL" id="CP000243">
    <property type="protein sequence ID" value="ABE05567.1"/>
    <property type="molecule type" value="Genomic_DNA"/>
</dbReference>
<dbReference type="RefSeq" id="WP_000610901.1">
    <property type="nucleotide sequence ID" value="NZ_CP064825.1"/>
</dbReference>
<dbReference type="SMR" id="Q1RGE7"/>
<dbReference type="GeneID" id="93777385"/>
<dbReference type="KEGG" id="eci:UTI89_C0057"/>
<dbReference type="HOGENOM" id="CLU_128074_0_0_6"/>
<dbReference type="Proteomes" id="UP000001952">
    <property type="component" value="Chromosome"/>
</dbReference>
<dbReference type="GO" id="GO:0070987">
    <property type="term" value="P:error-free translesion synthesis"/>
    <property type="evidence" value="ECO:0007669"/>
    <property type="project" value="TreeGrafter"/>
</dbReference>
<dbReference type="Gene3D" id="2.60.40.1470">
    <property type="entry name" value="ApaG domain"/>
    <property type="match status" value="1"/>
</dbReference>
<dbReference type="HAMAP" id="MF_00791">
    <property type="entry name" value="ApaG"/>
    <property type="match status" value="1"/>
</dbReference>
<dbReference type="InterPro" id="IPR007474">
    <property type="entry name" value="ApaG_domain"/>
</dbReference>
<dbReference type="InterPro" id="IPR036767">
    <property type="entry name" value="ApaG_sf"/>
</dbReference>
<dbReference type="InterPro" id="IPR023065">
    <property type="entry name" value="Uncharacterised_ApaG"/>
</dbReference>
<dbReference type="NCBIfam" id="NF003967">
    <property type="entry name" value="PRK05461.1"/>
    <property type="match status" value="1"/>
</dbReference>
<dbReference type="PANTHER" id="PTHR14289">
    <property type="entry name" value="F-BOX ONLY PROTEIN 3"/>
    <property type="match status" value="1"/>
</dbReference>
<dbReference type="PANTHER" id="PTHR14289:SF16">
    <property type="entry name" value="POLYMERASE DELTA-INTERACTING PROTEIN 2"/>
    <property type="match status" value="1"/>
</dbReference>
<dbReference type="Pfam" id="PF04379">
    <property type="entry name" value="DUF525"/>
    <property type="match status" value="1"/>
</dbReference>
<dbReference type="SUPFAM" id="SSF110069">
    <property type="entry name" value="ApaG-like"/>
    <property type="match status" value="1"/>
</dbReference>
<dbReference type="PROSITE" id="PS51087">
    <property type="entry name" value="APAG"/>
    <property type="match status" value="1"/>
</dbReference>
<organism>
    <name type="scientific">Escherichia coli (strain UTI89 / UPEC)</name>
    <dbReference type="NCBI Taxonomy" id="364106"/>
    <lineage>
        <taxon>Bacteria</taxon>
        <taxon>Pseudomonadati</taxon>
        <taxon>Pseudomonadota</taxon>
        <taxon>Gammaproteobacteria</taxon>
        <taxon>Enterobacterales</taxon>
        <taxon>Enterobacteriaceae</taxon>
        <taxon>Escherichia</taxon>
    </lineage>
</organism>